<name>F7ODM_OCIBA</name>
<protein>
    <recommendedName>
        <fullName evidence="5">Oxoglutarate-dependent flavonoid 7-O-demethylase 1</fullName>
        <shortName evidence="5">ObF7ODM1</shortName>
    </recommendedName>
    <alternativeName>
        <fullName evidence="5">2-oxoglutarate-dependent dioxygenase 1</fullName>
        <shortName evidence="5">ObDIOX1</shortName>
    </alternativeName>
    <alternativeName>
        <fullName evidence="8">8-hydroxysalvigenin 7-O-demethylase</fullName>
        <ecNumber evidence="3">1.14.13.-</ecNumber>
    </alternativeName>
    <alternativeName>
        <fullName evidence="8">Gardenin B 7-O-demethylase</fullName>
        <ecNumber evidence="3">1.14.13.-</ecNumber>
    </alternativeName>
</protein>
<comment type="function">
    <text evidence="3">Oxoglutarate-dependent dioxygenase (2-ODD) acting as a flavonoid 7-O-demethylase involved in the biosynthesis of polymethoxylated flavonoids natural products such as nevadensin and salvigenin, aroma compounds which contribute to the flavor of sweet basil, and exhibit pharmacological activities such as anti-allergic, anti-oxidant, antibacterial, anti-proliferative, and anti-inflammatory effects (PubMed:25378691). Catalyzes the 7-O-demethylation of methoxylated flavones; mediates the conversion of 8-hydroxysalvigenin (8-OH-SALV) to pilosin (PIL) and of gardenin B (GARD B) to nevadensin (NEV) (PubMed:25378691).</text>
</comment>
<comment type="catalytic activity">
    <reaction evidence="3">
        <text>gardenin B + 2-oxoglutarate + O2 = nevadensin + formaldehyde + succinate + CO2 + H(+)</text>
        <dbReference type="Rhea" id="RHEA:73443"/>
        <dbReference type="ChEBI" id="CHEBI:15378"/>
        <dbReference type="ChEBI" id="CHEBI:15379"/>
        <dbReference type="ChEBI" id="CHEBI:16526"/>
        <dbReference type="ChEBI" id="CHEBI:16810"/>
        <dbReference type="ChEBI" id="CHEBI:16842"/>
        <dbReference type="ChEBI" id="CHEBI:30031"/>
        <dbReference type="ChEBI" id="CHEBI:79628"/>
        <dbReference type="ChEBI" id="CHEBI:192756"/>
    </reaction>
    <physiologicalReaction direction="left-to-right" evidence="3">
        <dbReference type="Rhea" id="RHEA:73444"/>
    </physiologicalReaction>
</comment>
<comment type="catalytic activity">
    <reaction evidence="3">
        <text>8-hydroxysalvigenin + 2-oxoglutarate + O2 = pilosin + formaldehyde + succinate + CO2</text>
        <dbReference type="Rhea" id="RHEA:73511"/>
        <dbReference type="ChEBI" id="CHEBI:15379"/>
        <dbReference type="ChEBI" id="CHEBI:16526"/>
        <dbReference type="ChEBI" id="CHEBI:16810"/>
        <dbReference type="ChEBI" id="CHEBI:16842"/>
        <dbReference type="ChEBI" id="CHEBI:30031"/>
        <dbReference type="ChEBI" id="CHEBI:174456"/>
        <dbReference type="ChEBI" id="CHEBI:192704"/>
    </reaction>
    <physiologicalReaction direction="left-to-right" evidence="3">
        <dbReference type="Rhea" id="RHEA:73512"/>
    </physiologicalReaction>
</comment>
<comment type="cofactor">
    <cofactor evidence="2">
        <name>Fe(2+)</name>
        <dbReference type="ChEBI" id="CHEBI:29033"/>
    </cofactor>
    <text evidence="2">Binds 1 Fe(2+) ion per subunit.</text>
</comment>
<comment type="cofactor">
    <cofactor evidence="1">
        <name>L-ascorbate</name>
        <dbReference type="ChEBI" id="CHEBI:38290"/>
    </cofactor>
</comment>
<comment type="activity regulation">
    <text evidence="3">Inhibited by prohexadione-calcium, a 2-oxoglutarate-dependent dioxygenase (2-ODD) inhibitor, thus leading to a decreased abundance of nevadensin (NEV) and absence of pilosin (PIL) production, but to the accumulation of gardenin B (GARD B) and 8-hydroxysalvigenin (8-OH-SALV).</text>
</comment>
<comment type="biophysicochemical properties">
    <kinetics>
        <KM evidence="3">0.46 uM for gardenin B</KM>
        <KM evidence="3">20.98 uM for 2-oxoglutarate</KM>
        <KM evidence="3">4.02 uM for Fe(2+)</KM>
        <KM evidence="3">7.651 uM for ascorbate</KM>
        <Vmax evidence="3">1.267 pmol/sec/mg enzyme with gardenin B as substrate</Vmax>
        <Vmax evidence="3">1.087 pmol/sec/mg enzyme with 2-oxoglutarate as substrate</Vmax>
        <Vmax evidence="3">1.153 pmol/sec/mg enzyme with Fe(2+) as substrate</Vmax>
        <Vmax evidence="3">1.047 pmol/sec/mg enzyme with ascorbate as substrate</Vmax>
        <text evidence="3">kcat is 5.38x10(2) sec(-1) with gardenin B as substrate (PubMed:25378691). kcat is 4.62x10(2) sec(-1) with 2-oxoglutarate as substrate (PubMed:25378691). kcat is 4.96x10(2) sec(-1) with Fe(2+) as substrate (PubMed:25378691). kcat is 84.56x10(2) sec(-1) with ascorbate as substrate (PubMed:25378691).</text>
    </kinetics>
</comment>
<comment type="pathway">
    <text evidence="6">Flavonoid metabolism.</text>
</comment>
<comment type="subunit">
    <text evidence="3">Monomer.</text>
</comment>
<comment type="subcellular location">
    <subcellularLocation>
        <location evidence="1">Cytoplasm</location>
    </subcellularLocation>
</comment>
<comment type="tissue specificity">
    <text evidence="3">Accumulates in the trichomes of nevadensin-accumulating strains (e.g. cv. SD and cv. EMX-1) and in cv. SW (at protein level) but not in cv. MC.</text>
</comment>
<comment type="biotechnology">
    <text evidence="4">Nevadensin is a selective inhibitor of human carboxylesterase 1 (hCE-1), a key enzyme responsible for the hydrolysis of a wide range of endogenous and xenobiotic esters.</text>
</comment>
<comment type="similarity">
    <text evidence="7">Belongs to the iron/ascorbate-dependent oxidoreductase family.</text>
</comment>
<accession>A0A0B6CGH9</accession>
<dbReference type="EC" id="1.14.13.-" evidence="3"/>
<dbReference type="EMBL" id="KM507365">
    <property type="protein sequence ID" value="AJI44435.1"/>
    <property type="molecule type" value="mRNA"/>
</dbReference>
<dbReference type="SMR" id="A0A0B6CGH9"/>
<dbReference type="BioCyc" id="MetaCyc:MONOMER-18078"/>
<dbReference type="GO" id="GO:0005737">
    <property type="term" value="C:cytoplasm"/>
    <property type="evidence" value="ECO:0007669"/>
    <property type="project" value="UniProtKB-SubCell"/>
</dbReference>
<dbReference type="GO" id="GO:0016706">
    <property type="term" value="F:2-oxoglutarate-dependent dioxygenase activity"/>
    <property type="evidence" value="ECO:0007669"/>
    <property type="project" value="UniProtKB-ARBA"/>
</dbReference>
<dbReference type="GO" id="GO:0046872">
    <property type="term" value="F:metal ion binding"/>
    <property type="evidence" value="ECO:0007669"/>
    <property type="project" value="UniProtKB-KW"/>
</dbReference>
<dbReference type="GO" id="GO:0009805">
    <property type="term" value="P:coumarin biosynthetic process"/>
    <property type="evidence" value="ECO:0007669"/>
    <property type="project" value="UniProtKB-ARBA"/>
</dbReference>
<dbReference type="GO" id="GO:0002238">
    <property type="term" value="P:response to molecule of fungal origin"/>
    <property type="evidence" value="ECO:0007669"/>
    <property type="project" value="UniProtKB-ARBA"/>
</dbReference>
<dbReference type="FunFam" id="2.60.120.330:FF:000001">
    <property type="entry name" value="Protein SRG1"/>
    <property type="match status" value="1"/>
</dbReference>
<dbReference type="Gene3D" id="2.60.120.330">
    <property type="entry name" value="B-lactam Antibiotic, Isopenicillin N Synthase, Chain"/>
    <property type="match status" value="1"/>
</dbReference>
<dbReference type="InterPro" id="IPR026992">
    <property type="entry name" value="DIOX_N"/>
</dbReference>
<dbReference type="InterPro" id="IPR044861">
    <property type="entry name" value="IPNS-like_FE2OG_OXY"/>
</dbReference>
<dbReference type="InterPro" id="IPR027443">
    <property type="entry name" value="IPNS-like_sf"/>
</dbReference>
<dbReference type="InterPro" id="IPR005123">
    <property type="entry name" value="Oxoglu/Fe-dep_dioxygenase_dom"/>
</dbReference>
<dbReference type="InterPro" id="IPR050295">
    <property type="entry name" value="Plant_2OG-oxidoreductases"/>
</dbReference>
<dbReference type="PANTHER" id="PTHR47991">
    <property type="entry name" value="OXOGLUTARATE/IRON-DEPENDENT DIOXYGENASE"/>
    <property type="match status" value="1"/>
</dbReference>
<dbReference type="Pfam" id="PF03171">
    <property type="entry name" value="2OG-FeII_Oxy"/>
    <property type="match status" value="1"/>
</dbReference>
<dbReference type="Pfam" id="PF14226">
    <property type="entry name" value="DIOX_N"/>
    <property type="match status" value="1"/>
</dbReference>
<dbReference type="SUPFAM" id="SSF51197">
    <property type="entry name" value="Clavaminate synthase-like"/>
    <property type="match status" value="1"/>
</dbReference>
<dbReference type="PROSITE" id="PS51471">
    <property type="entry name" value="FE2OG_OXY"/>
    <property type="match status" value="1"/>
</dbReference>
<organism>
    <name type="scientific">Ocimum basilicum</name>
    <name type="common">Sweet basil</name>
    <dbReference type="NCBI Taxonomy" id="39350"/>
    <lineage>
        <taxon>Eukaryota</taxon>
        <taxon>Viridiplantae</taxon>
        <taxon>Streptophyta</taxon>
        <taxon>Embryophyta</taxon>
        <taxon>Tracheophyta</taxon>
        <taxon>Spermatophyta</taxon>
        <taxon>Magnoliopsida</taxon>
        <taxon>eudicotyledons</taxon>
        <taxon>Gunneridae</taxon>
        <taxon>Pentapetalae</taxon>
        <taxon>asterids</taxon>
        <taxon>lamiids</taxon>
        <taxon>Lamiales</taxon>
        <taxon>Lamiaceae</taxon>
        <taxon>Nepetoideae</taxon>
        <taxon>Ocimeae</taxon>
        <taxon>Ociminae</taxon>
        <taxon>Ocimum</taxon>
    </lineage>
</organism>
<feature type="chain" id="PRO_0000456922" description="Oxoglutarate-dependent flavonoid 7-O-demethylase 1">
    <location>
        <begin position="1"/>
        <end position="372"/>
    </location>
</feature>
<feature type="domain" description="Fe2OG dioxygenase" evidence="2">
    <location>
        <begin position="221"/>
        <end position="321"/>
    </location>
</feature>
<feature type="binding site" evidence="2">
    <location>
        <position position="245"/>
    </location>
    <ligand>
        <name>Fe cation</name>
        <dbReference type="ChEBI" id="CHEBI:24875"/>
    </ligand>
</feature>
<feature type="binding site" evidence="2">
    <location>
        <position position="247"/>
    </location>
    <ligand>
        <name>Fe cation</name>
        <dbReference type="ChEBI" id="CHEBI:24875"/>
    </ligand>
</feature>
<feature type="binding site" evidence="2">
    <location>
        <position position="302"/>
    </location>
    <ligand>
        <name>Fe cation</name>
        <dbReference type="ChEBI" id="CHEBI:24875"/>
    </ligand>
</feature>
<feature type="binding site" evidence="2">
    <location>
        <position position="312"/>
    </location>
    <ligand>
        <name>2-oxoglutarate</name>
        <dbReference type="ChEBI" id="CHEBI:16810"/>
    </ligand>
</feature>
<gene>
    <name evidence="5" type="primary">F7ODM1</name>
    <name evidence="5" type="synonym">DIOX1</name>
</gene>
<keyword id="KW-0963">Cytoplasm</keyword>
<keyword id="KW-0223">Dioxygenase</keyword>
<keyword id="KW-0408">Iron</keyword>
<keyword id="KW-0479">Metal-binding</keyword>
<keyword id="KW-0560">Oxidoreductase</keyword>
<proteinExistence type="evidence at protein level"/>
<evidence type="ECO:0000250" key="1">
    <source>
        <dbReference type="UniProtKB" id="Q94LP4"/>
    </source>
</evidence>
<evidence type="ECO:0000255" key="2">
    <source>
        <dbReference type="PROSITE-ProRule" id="PRU00805"/>
    </source>
</evidence>
<evidence type="ECO:0000269" key="3">
    <source>
    </source>
</evidence>
<evidence type="ECO:0000269" key="4">
    <source>
    </source>
</evidence>
<evidence type="ECO:0000303" key="5">
    <source>
    </source>
</evidence>
<evidence type="ECO:0000303" key="6">
    <source>
    </source>
</evidence>
<evidence type="ECO:0000305" key="7"/>
<evidence type="ECO:0000305" key="8">
    <source>
    </source>
</evidence>
<reference key="1">
    <citation type="journal article" date="2015" name="Plant Cell Physiol.">
        <title>Identification of a unique 2-oxoglutarate-dependent flavone 7-O-demethylase completes the elucidation of the lipophilic flavone network in basil.</title>
        <authorList>
            <person name="Berim A."/>
            <person name="Kim M.-J."/>
            <person name="Gang D.R."/>
        </authorList>
    </citation>
    <scope>NUCLEOTIDE SEQUENCE [MRNA]</scope>
    <scope>FUNCTION</scope>
    <scope>CATALYTIC ACTIVITY</scope>
    <scope>BIOPHYSICOCHEMICAL PROPERTIES</scope>
    <scope>ACTIVITY REGULATION</scope>
    <scope>SUBUNIT</scope>
    <source>
        <strain>cv. EMX-1</strain>
        <strain>cv. MC</strain>
        <strain>cv. SD</strain>
        <strain>cv. SW</strain>
        <tissue>Peltate glandular trichome</tissue>
    </source>
</reference>
<reference key="2">
    <citation type="journal article" date="2018" name="Int. J. Biol. Macromol.">
        <title>Nevadensin is a naturally occurring selective inhibitor of human carboxylesterase 1.</title>
        <authorList>
            <person name="Wang Y.-Q."/>
            <person name="Weng Z.-M."/>
            <person name="Dou T.-Y."/>
            <person name="Hou J."/>
            <person name="Wang D.-D."/>
            <person name="Ding L.-L."/>
            <person name="Zou L.-W."/>
            <person name="Yu Y."/>
            <person name="Chen J."/>
            <person name="Tang H."/>
            <person name="Ge G.-B."/>
        </authorList>
    </citation>
    <scope>BIOTECHNOLOGY</scope>
</reference>
<reference key="3">
    <citation type="journal article" date="2019" name="Nat. Prod. Rep.">
        <title>Non-volatile natural products in plant glandular trichomes: chemistry, biological activities and biosynthesis.</title>
        <authorList>
            <person name="Liu Y."/>
            <person name="Jing S.-X."/>
            <person name="Luo S.-H."/>
            <person name="Li S.-H."/>
        </authorList>
    </citation>
    <scope>PATHWAY</scope>
    <scope>REVIEW</scope>
</reference>
<sequence length="372" mass="41648">MRITLQYIKLESKNTKERDMAESKAIGRSLEVPNVQELAKGKLASVPARYVRYSDRENTTLPPLTQIPVIDMQALLHPNSFEAELNSLHKACKQWGFFQLINHGVEAAVMEKMKLEMQEFFNLPLEEKQKFRQSADDMEGYGQSFVVSDEQKLDWADGFSVISLPTYLRKPHLIPKLPAPFRDAIDAYGAQLKELAIKILGFMAEALGMDPHEMTALFEEGIQALRMNYYPPCPQPEMVSGLCPHSDAGGLTILMQVNEVEGLQVRKDGGWVPVSPLPDAFIINLGDILEIVTNGEYFSVEHQATVNGDKERLSVAAFLNPKMEDNIGPAASFISGETPAKFKTITAAEYFKGLFSKELDGKSYLDLMRIQN</sequence>